<organism>
    <name type="scientific">Saccharomyces cerevisiae (strain ATCC 204508 / S288c)</name>
    <name type="common">Baker's yeast</name>
    <dbReference type="NCBI Taxonomy" id="559292"/>
    <lineage>
        <taxon>Eukaryota</taxon>
        <taxon>Fungi</taxon>
        <taxon>Dikarya</taxon>
        <taxon>Ascomycota</taxon>
        <taxon>Saccharomycotina</taxon>
        <taxon>Saccharomycetes</taxon>
        <taxon>Saccharomycetales</taxon>
        <taxon>Saccharomycetaceae</taxon>
        <taxon>Saccharomyces</taxon>
    </lineage>
</organism>
<evidence type="ECO:0000256" key="1">
    <source>
        <dbReference type="SAM" id="MobiDB-lite"/>
    </source>
</evidence>
<evidence type="ECO:0000269" key="2">
    <source>
    </source>
</evidence>
<evidence type="ECO:0000269" key="3">
    <source>
    </source>
</evidence>
<evidence type="ECO:0000269" key="4">
    <source>
    </source>
</evidence>
<evidence type="ECO:0000269" key="5">
    <source>
    </source>
</evidence>
<evidence type="ECO:0000269" key="6">
    <source>
    </source>
</evidence>
<evidence type="ECO:0000305" key="7"/>
<evidence type="ECO:0000312" key="8">
    <source>
        <dbReference type="SGD" id="S000006067"/>
    </source>
</evidence>
<evidence type="ECO:0007744" key="9">
    <source>
    </source>
</evidence>
<evidence type="ECO:0007744" key="10">
    <source>
    </source>
</evidence>
<evidence type="ECO:0007829" key="11">
    <source>
        <dbReference type="PDB" id="5OOQ"/>
    </source>
</evidence>
<dbReference type="EMBL" id="U43703">
    <property type="protein sequence ID" value="AAB68216.1"/>
    <property type="molecule type" value="Genomic_DNA"/>
</dbReference>
<dbReference type="EMBL" id="X96770">
    <property type="protein sequence ID" value="CAA65547.1"/>
    <property type="molecule type" value="Genomic_DNA"/>
</dbReference>
<dbReference type="EMBL" id="Z73502">
    <property type="protein sequence ID" value="CAA97850.1"/>
    <property type="molecule type" value="Genomic_DNA"/>
</dbReference>
<dbReference type="EMBL" id="BK006949">
    <property type="protein sequence ID" value="DAA11289.1"/>
    <property type="molecule type" value="Genomic_DNA"/>
</dbReference>
<dbReference type="PIR" id="S65157">
    <property type="entry name" value="S65157"/>
</dbReference>
<dbReference type="RefSeq" id="NP_015179.1">
    <property type="nucleotide sequence ID" value="NM_001183960.1"/>
</dbReference>
<dbReference type="PDB" id="3JCT">
    <property type="method" value="EM"/>
    <property type="resolution" value="3.08 A"/>
    <property type="chains" value="q=1-455"/>
</dbReference>
<dbReference type="PDB" id="5OOQ">
    <property type="method" value="X-ray"/>
    <property type="resolution" value="3.20 A"/>
    <property type="chains" value="C/D=59-91"/>
</dbReference>
<dbReference type="PDB" id="6M62">
    <property type="method" value="EM"/>
    <property type="resolution" value="3.20 A"/>
    <property type="chains" value="q=1-455"/>
</dbReference>
<dbReference type="PDB" id="6YLX">
    <property type="method" value="EM"/>
    <property type="resolution" value="3.90 A"/>
    <property type="chains" value="q=1-455"/>
</dbReference>
<dbReference type="PDB" id="6YLY">
    <property type="method" value="EM"/>
    <property type="resolution" value="3.80 A"/>
    <property type="chains" value="q=1-455"/>
</dbReference>
<dbReference type="PDB" id="7BTB">
    <property type="method" value="EM"/>
    <property type="resolution" value="3.22 A"/>
    <property type="chains" value="q=1-455"/>
</dbReference>
<dbReference type="PDB" id="7OHQ">
    <property type="method" value="EM"/>
    <property type="resolution" value="3.10 A"/>
    <property type="chains" value="q=1-455"/>
</dbReference>
<dbReference type="PDB" id="7U0H">
    <property type="method" value="EM"/>
    <property type="resolution" value="2.76 A"/>
    <property type="chains" value="q=1-455"/>
</dbReference>
<dbReference type="PDB" id="7UOO">
    <property type="method" value="EM"/>
    <property type="resolution" value="2.34 A"/>
    <property type="chains" value="q=1-455"/>
</dbReference>
<dbReference type="PDB" id="7UQB">
    <property type="method" value="EM"/>
    <property type="resolution" value="2.43 A"/>
    <property type="chains" value="q=1-455"/>
</dbReference>
<dbReference type="PDB" id="7UQZ">
    <property type="method" value="EM"/>
    <property type="resolution" value="2.44 A"/>
    <property type="chains" value="q=1-455"/>
</dbReference>
<dbReference type="PDB" id="7V08">
    <property type="method" value="EM"/>
    <property type="resolution" value="2.36 A"/>
    <property type="chains" value="q=1-455"/>
</dbReference>
<dbReference type="PDBsum" id="3JCT"/>
<dbReference type="PDBsum" id="5OOQ"/>
<dbReference type="PDBsum" id="6M62"/>
<dbReference type="PDBsum" id="6YLX"/>
<dbReference type="PDBsum" id="6YLY"/>
<dbReference type="PDBsum" id="7BTB"/>
<dbReference type="PDBsum" id="7OHQ"/>
<dbReference type="PDBsum" id="7U0H"/>
<dbReference type="PDBsum" id="7UOO"/>
<dbReference type="PDBsum" id="7UQB"/>
<dbReference type="PDBsum" id="7UQZ"/>
<dbReference type="PDBsum" id="7V08"/>
<dbReference type="EMDB" id="EMD-10841"/>
<dbReference type="EMDB" id="EMD-10842"/>
<dbReference type="EMDB" id="EMD-12905"/>
<dbReference type="EMDB" id="EMD-26259"/>
<dbReference type="EMDB" id="EMD-26651"/>
<dbReference type="EMDB" id="EMD-26686"/>
<dbReference type="EMDB" id="EMD-26703"/>
<dbReference type="EMDB" id="EMD-26941"/>
<dbReference type="EMDB" id="EMD-30108"/>
<dbReference type="EMDB" id="EMD-30174"/>
<dbReference type="SMR" id="Q12080"/>
<dbReference type="BioGRID" id="36037">
    <property type="interactions" value="396"/>
</dbReference>
<dbReference type="DIP" id="DIP-993N"/>
<dbReference type="FunCoup" id="Q12080">
    <property type="interactions" value="831"/>
</dbReference>
<dbReference type="IntAct" id="Q12080">
    <property type="interactions" value="75"/>
</dbReference>
<dbReference type="MINT" id="Q12080"/>
<dbReference type="STRING" id="4932.YPL146C"/>
<dbReference type="iPTMnet" id="Q12080"/>
<dbReference type="PaxDb" id="4932-YPL146C"/>
<dbReference type="PeptideAtlas" id="Q12080"/>
<dbReference type="EnsemblFungi" id="YPL146C_mRNA">
    <property type="protein sequence ID" value="YPL146C"/>
    <property type="gene ID" value="YPL146C"/>
</dbReference>
<dbReference type="GeneID" id="855957"/>
<dbReference type="KEGG" id="sce:YPL146C"/>
<dbReference type="AGR" id="SGD:S000006067"/>
<dbReference type="SGD" id="S000006067">
    <property type="gene designation" value="NOP53"/>
</dbReference>
<dbReference type="VEuPathDB" id="FungiDB:YPL146C"/>
<dbReference type="eggNOG" id="KOG2823">
    <property type="taxonomic scope" value="Eukaryota"/>
</dbReference>
<dbReference type="GeneTree" id="ENSGT00390000017267"/>
<dbReference type="HOGENOM" id="CLU_035888_1_1_1"/>
<dbReference type="InParanoid" id="Q12080"/>
<dbReference type="OMA" id="TEKWTHK"/>
<dbReference type="OrthoDB" id="5072at2759"/>
<dbReference type="BioCyc" id="YEAST:G3O-34043-MONOMER"/>
<dbReference type="BioGRID-ORCS" id="855957">
    <property type="hits" value="4 hits in 10 CRISPR screens"/>
</dbReference>
<dbReference type="PRO" id="PR:Q12080"/>
<dbReference type="Proteomes" id="UP000002311">
    <property type="component" value="Chromosome XVI"/>
</dbReference>
<dbReference type="RNAct" id="Q12080">
    <property type="molecule type" value="protein"/>
</dbReference>
<dbReference type="GO" id="GO:0000176">
    <property type="term" value="C:nuclear exosome (RNase complex)"/>
    <property type="evidence" value="ECO:0000315"/>
    <property type="project" value="SGD"/>
</dbReference>
<dbReference type="GO" id="GO:0005730">
    <property type="term" value="C:nucleolus"/>
    <property type="evidence" value="ECO:0000314"/>
    <property type="project" value="SGD"/>
</dbReference>
<dbReference type="GO" id="GO:0005654">
    <property type="term" value="C:nucleoplasm"/>
    <property type="evidence" value="ECO:0007669"/>
    <property type="project" value="UniProtKB-SubCell"/>
</dbReference>
<dbReference type="GO" id="GO:0005634">
    <property type="term" value="C:nucleus"/>
    <property type="evidence" value="ECO:0000314"/>
    <property type="project" value="SGD"/>
</dbReference>
<dbReference type="GO" id="GO:0008097">
    <property type="term" value="F:5S rRNA binding"/>
    <property type="evidence" value="ECO:0000318"/>
    <property type="project" value="GO_Central"/>
</dbReference>
<dbReference type="GO" id="GO:0019843">
    <property type="term" value="F:rRNA binding"/>
    <property type="evidence" value="ECO:0000314"/>
    <property type="project" value="SGD"/>
</dbReference>
<dbReference type="GO" id="GO:0000460">
    <property type="term" value="P:maturation of 5.8S rRNA"/>
    <property type="evidence" value="ECO:0000315"/>
    <property type="project" value="CACAO"/>
</dbReference>
<dbReference type="GO" id="GO:0000463">
    <property type="term" value="P:maturation of LSU-rRNA from tricistronic rRNA transcript (SSU-rRNA, 5.8S rRNA, LSU-rRNA)"/>
    <property type="evidence" value="ECO:0000315"/>
    <property type="project" value="SGD"/>
</dbReference>
<dbReference type="GO" id="GO:0000027">
    <property type="term" value="P:ribosomal large subunit assembly"/>
    <property type="evidence" value="ECO:0000250"/>
    <property type="project" value="UniProtKB"/>
</dbReference>
<dbReference type="GO" id="GO:0000055">
    <property type="term" value="P:ribosomal large subunit export from nucleus"/>
    <property type="evidence" value="ECO:0000315"/>
    <property type="project" value="SGD"/>
</dbReference>
<dbReference type="GO" id="GO:0006364">
    <property type="term" value="P:rRNA processing"/>
    <property type="evidence" value="ECO:0000315"/>
    <property type="project" value="SGD"/>
</dbReference>
<dbReference type="InterPro" id="IPR011687">
    <property type="entry name" value="Nop53/GLTSCR2"/>
</dbReference>
<dbReference type="PANTHER" id="PTHR14211">
    <property type="entry name" value="GLIOMA SUPPRESSOR CANDIDATE REGION GENE 2"/>
    <property type="match status" value="1"/>
</dbReference>
<dbReference type="PANTHER" id="PTHR14211:SF7">
    <property type="entry name" value="RIBOSOME BIOGENESIS PROTEIN NOP53"/>
    <property type="match status" value="1"/>
</dbReference>
<dbReference type="Pfam" id="PF07767">
    <property type="entry name" value="Nop53"/>
    <property type="match status" value="1"/>
</dbReference>
<dbReference type="PIRSF" id="PIRSF017302">
    <property type="entry name" value="Gltscr2"/>
    <property type="match status" value="1"/>
</dbReference>
<gene>
    <name evidence="8" type="primary">NOP53</name>
    <name type="ordered locus">YPL146C</name>
    <name type="ORF">LPI2C</name>
    <name type="ORF">P2610</name>
</gene>
<feature type="chain" id="PRO_0000218965" description="Ribosome biogenesis protein NOP53">
    <location>
        <begin position="1"/>
        <end position="455"/>
    </location>
</feature>
<feature type="region of interest" description="Disordered" evidence="1">
    <location>
        <begin position="1"/>
        <end position="25"/>
    </location>
</feature>
<feature type="region of interest" description="Disordered" evidence="1">
    <location>
        <begin position="264"/>
        <end position="333"/>
    </location>
</feature>
<feature type="compositionally biased region" description="Polar residues" evidence="1">
    <location>
        <begin position="1"/>
        <end position="15"/>
    </location>
</feature>
<feature type="compositionally biased region" description="Basic residues" evidence="1">
    <location>
        <begin position="16"/>
        <end position="25"/>
    </location>
</feature>
<feature type="compositionally biased region" description="Acidic residues" evidence="1">
    <location>
        <begin position="268"/>
        <end position="294"/>
    </location>
</feature>
<feature type="compositionally biased region" description="Basic residues" evidence="1">
    <location>
        <begin position="314"/>
        <end position="328"/>
    </location>
</feature>
<feature type="modified residue" description="Phosphoserine" evidence="9 10">
    <location>
        <position position="31"/>
    </location>
</feature>
<feature type="strand" evidence="11">
    <location>
        <begin position="61"/>
        <end position="63"/>
    </location>
</feature>
<keyword id="KW-0002">3D-structure</keyword>
<keyword id="KW-0539">Nucleus</keyword>
<keyword id="KW-0597">Phosphoprotein</keyword>
<keyword id="KW-1185">Reference proteome</keyword>
<keyword id="KW-0690">Ribosome biogenesis</keyword>
<keyword id="KW-0694">RNA-binding</keyword>
<keyword id="KW-0698">rRNA processing</keyword>
<name>NOP53_YEAST</name>
<reference key="1">
    <citation type="journal article" date="1996" name="Yeast">
        <title>The sequence of 55 kb on the left arm of yeast chromosome XVI identifies a small nuclear RNA, a new putative protein kinase and two new putative regulators.</title>
        <authorList>
            <person name="Purnelle B."/>
            <person name="Coster F."/>
            <person name="Goffeau A."/>
        </authorList>
    </citation>
    <scope>NUCLEOTIDE SEQUENCE [GENOMIC DNA]</scope>
    <source>
        <strain>ATCC 204511 / S288c / AB972</strain>
    </source>
</reference>
<reference key="2">
    <citation type="journal article" date="1997" name="Nature">
        <title>The nucleotide sequence of Saccharomyces cerevisiae chromosome XVI.</title>
        <authorList>
            <person name="Bussey H."/>
            <person name="Storms R.K."/>
            <person name="Ahmed A."/>
            <person name="Albermann K."/>
            <person name="Allen E."/>
            <person name="Ansorge W."/>
            <person name="Araujo R."/>
            <person name="Aparicio A."/>
            <person name="Barrell B.G."/>
            <person name="Badcock K."/>
            <person name="Benes V."/>
            <person name="Botstein D."/>
            <person name="Bowman S."/>
            <person name="Brueckner M."/>
            <person name="Carpenter J."/>
            <person name="Cherry J.M."/>
            <person name="Chung E."/>
            <person name="Churcher C.M."/>
            <person name="Coster F."/>
            <person name="Davis K."/>
            <person name="Davis R.W."/>
            <person name="Dietrich F.S."/>
            <person name="Delius H."/>
            <person name="DiPaolo T."/>
            <person name="Dubois E."/>
            <person name="Duesterhoeft A."/>
            <person name="Duncan M."/>
            <person name="Floeth M."/>
            <person name="Fortin N."/>
            <person name="Friesen J.D."/>
            <person name="Fritz C."/>
            <person name="Goffeau A."/>
            <person name="Hall J."/>
            <person name="Hebling U."/>
            <person name="Heumann K."/>
            <person name="Hilbert H."/>
            <person name="Hillier L.W."/>
            <person name="Hunicke-Smith S."/>
            <person name="Hyman R.W."/>
            <person name="Johnston M."/>
            <person name="Kalman S."/>
            <person name="Kleine K."/>
            <person name="Komp C."/>
            <person name="Kurdi O."/>
            <person name="Lashkari D."/>
            <person name="Lew H."/>
            <person name="Lin A."/>
            <person name="Lin D."/>
            <person name="Louis E.J."/>
            <person name="Marathe R."/>
            <person name="Messenguy F."/>
            <person name="Mewes H.-W."/>
            <person name="Mirtipati S."/>
            <person name="Moestl D."/>
            <person name="Mueller-Auer S."/>
            <person name="Namath A."/>
            <person name="Nentwich U."/>
            <person name="Oefner P."/>
            <person name="Pearson D."/>
            <person name="Petel F.X."/>
            <person name="Pohl T.M."/>
            <person name="Purnelle B."/>
            <person name="Rajandream M.A."/>
            <person name="Rechmann S."/>
            <person name="Rieger M."/>
            <person name="Riles L."/>
            <person name="Roberts D."/>
            <person name="Schaefer M."/>
            <person name="Scharfe M."/>
            <person name="Scherens B."/>
            <person name="Schramm S."/>
            <person name="Schroeder M."/>
            <person name="Sdicu A.-M."/>
            <person name="Tettelin H."/>
            <person name="Urrestarazu L.A."/>
            <person name="Ushinsky S."/>
            <person name="Vierendeels F."/>
            <person name="Vissers S."/>
            <person name="Voss H."/>
            <person name="Walsh S.V."/>
            <person name="Wambutt R."/>
            <person name="Wang Y."/>
            <person name="Wedler E."/>
            <person name="Wedler H."/>
            <person name="Winnett E."/>
            <person name="Zhong W.-W."/>
            <person name="Zollner A."/>
            <person name="Vo D.H."/>
            <person name="Hani J."/>
        </authorList>
    </citation>
    <scope>NUCLEOTIDE SEQUENCE [LARGE SCALE GENOMIC DNA]</scope>
    <source>
        <strain>ATCC 204508 / S288c</strain>
    </source>
</reference>
<reference key="3">
    <citation type="journal article" date="2014" name="G3 (Bethesda)">
        <title>The reference genome sequence of Saccharomyces cerevisiae: Then and now.</title>
        <authorList>
            <person name="Engel S.R."/>
            <person name="Dietrich F.S."/>
            <person name="Fisk D.G."/>
            <person name="Binkley G."/>
            <person name="Balakrishnan R."/>
            <person name="Costanzo M.C."/>
            <person name="Dwight S.S."/>
            <person name="Hitz B.C."/>
            <person name="Karra K."/>
            <person name="Nash R.S."/>
            <person name="Weng S."/>
            <person name="Wong E.D."/>
            <person name="Lloyd P."/>
            <person name="Skrzypek M.S."/>
            <person name="Miyasato S.R."/>
            <person name="Simison M."/>
            <person name="Cherry J.M."/>
        </authorList>
    </citation>
    <scope>GENOME REANNOTATION</scope>
    <source>
        <strain>ATCC 204508 / S288c</strain>
    </source>
</reference>
<reference key="4">
    <citation type="journal article" date="2003" name="Nature">
        <title>Global analysis of protein expression in yeast.</title>
        <authorList>
            <person name="Ghaemmaghami S."/>
            <person name="Huh W.-K."/>
            <person name="Bower K."/>
            <person name="Howson R.W."/>
            <person name="Belle A."/>
            <person name="Dephoure N."/>
            <person name="O'Shea E.K."/>
            <person name="Weissman J.S."/>
        </authorList>
    </citation>
    <scope>LEVEL OF PROTEIN EXPRESSION [LARGE SCALE ANALYSIS]</scope>
</reference>
<reference key="5">
    <citation type="journal article" date="2005" name="Biochem. J.">
        <title>Nop53p is a novel nucleolar 60S ribosomal subunit biogenesis protein.</title>
        <authorList>
            <person name="Sydorskyy Y."/>
            <person name="Dilworth D.J."/>
            <person name="Halloran B."/>
            <person name="Yi E.C."/>
            <person name="Makhnevych T."/>
            <person name="Wozniak R.W."/>
            <person name="Aitchison J.D."/>
        </authorList>
    </citation>
    <scope>FUNCTION</scope>
    <scope>INTERACTION WITH CBF5</scope>
    <scope>FPR3</scope>
    <scope>FPR4 AND NOP2</scope>
    <scope>SUBCELLULAR LOCATION</scope>
    <scope>DISRUPTION PHENOTYPE</scope>
    <scope>IDENTIFICATION BY MASS SPECTROMETRY</scope>
</reference>
<reference key="6">
    <citation type="journal article" date="2005" name="FEBS J.">
        <title>Nop53p, an essential nucleolar protein that interacts with Nop17p and Nip7p, is required for pre-rRNA processing in Saccharomyces cerevisiae.</title>
        <authorList>
            <person name="Granato D.C."/>
            <person name="Gonzales F.A."/>
            <person name="Luz J.S."/>
            <person name="Cassiola F."/>
            <person name="Machado-Santelli G.M."/>
            <person name="Oliveira C.C."/>
        </authorList>
    </citation>
    <scope>FUNCTION</scope>
    <scope>INTERACTION WITH PIH1</scope>
    <scope>PRE-RIBOSOMAL RNAS AND 5.8S RIBOSOMAL RNA</scope>
    <scope>SUBCELLULAR LOCATION</scope>
    <scope>DISRUPTION PHENOTYPE</scope>
</reference>
<reference key="7">
    <citation type="journal article" date="2005" name="RNA">
        <title>Nop53p is required for late 60S ribosome subunit maturation and nuclear export in yeast.</title>
        <authorList>
            <person name="Thomson E."/>
            <person name="Tollervey D."/>
        </authorList>
    </citation>
    <scope>FUNCTION</scope>
    <scope>INTERACTION WITH PRE-60S RIBOSOMAL COMPLEXES</scope>
    <scope>SUBCELLULAR LOCATION</scope>
    <scope>DISRUPTION PHENOTYPE</scope>
</reference>
<reference key="8">
    <citation type="journal article" date="2008" name="FEBS J.">
        <title>Nop53p interacts with 5.8S rRNA co-transcriptionally, and regulates processing of pre-rRNA by the exosome.</title>
        <authorList>
            <person name="Granato D.C."/>
            <person name="Machado-Santelli G.M."/>
            <person name="Oliveira C.C."/>
        </authorList>
    </citation>
    <scope>FUNCTION</scope>
    <scope>INTERACTION WITH RRN3</scope>
    <scope>RRP6</scope>
    <scope>PAP2 AND RIBOSOMAL RNAS</scope>
    <scope>SUBCELLULAR LOCATION</scope>
    <scope>DISRUPTION PHENOTYPE</scope>
</reference>
<reference key="9">
    <citation type="journal article" date="2008" name="Mol. Cell. Proteomics">
        <title>A multidimensional chromatography technology for in-depth phosphoproteome analysis.</title>
        <authorList>
            <person name="Albuquerque C.P."/>
            <person name="Smolka M.B."/>
            <person name="Payne S.H."/>
            <person name="Bafna V."/>
            <person name="Eng J."/>
            <person name="Zhou H."/>
        </authorList>
    </citation>
    <scope>PHOSPHORYLATION [LARGE SCALE ANALYSIS] AT SER-31</scope>
    <scope>IDENTIFICATION BY MASS SPECTROMETRY [LARGE SCALE ANALYSIS]</scope>
</reference>
<reference key="10">
    <citation type="journal article" date="2009" name="Science">
        <title>Global analysis of Cdk1 substrate phosphorylation sites provides insights into evolution.</title>
        <authorList>
            <person name="Holt L.J."/>
            <person name="Tuch B.B."/>
            <person name="Villen J."/>
            <person name="Johnson A.D."/>
            <person name="Gygi S.P."/>
            <person name="Morgan D.O."/>
        </authorList>
    </citation>
    <scope>PHOSPHORYLATION [LARGE SCALE ANALYSIS] AT SER-31</scope>
    <scope>IDENTIFICATION BY MASS SPECTROMETRY [LARGE SCALE ANALYSIS]</scope>
</reference>
<protein>
    <recommendedName>
        <fullName evidence="7">Ribosome biogenesis protein NOP53</fullName>
    </recommendedName>
    <alternativeName>
        <fullName>Nucleolar protein 53</fullName>
    </alternativeName>
</protein>
<accession>Q12080</accession>
<accession>D6W3M3</accession>
<comment type="function">
    <text evidence="3 4 5 6">Late-acting factor in the nuclear maturation of 60S ribosomal subunits, which is required for normal acquisition of export competence. Required for the export of the large subunit. Acts to stimulate the RNase activity of the exosome complex, and may recruit the exosome to 7S pre-rRNA for processing. Associates with numerous RNAs including the 27S and 7S pre-rRNAs and the box H/ACA snoRNA snR37. Also interacts (via N-terminal region) with the mature 25S rRNA and the mature 5.8S rRNA.</text>
</comment>
<comment type="subunit">
    <text evidence="3 4 5 6">Interacts with CBF5, FPR3, FPR4, NOP2, PIH1, RRN3, RRP6 and PAP2. Interacts with pre-60S ribosomal particles.</text>
</comment>
<comment type="interaction">
    <interactant intactId="EBI-29395">
        <id>Q12080</id>
    </interactant>
    <interactant intactId="EBI-31385">
        <id>Q03862</id>
        <label>ARX1</label>
    </interactant>
    <organismsDiffer>false</organismsDiffer>
    <experiments>4</experiments>
</comment>
<comment type="interaction">
    <interactant intactId="EBI-29395">
        <id>Q12080</id>
    </interactant>
    <interactant intactId="EBI-6951">
        <id>P38911</id>
        <label>FPR3</label>
    </interactant>
    <organismsDiffer>false</organismsDiffer>
    <experiments>4</experiments>
</comment>
<comment type="interaction">
    <interactant intactId="EBI-29395">
        <id>Q12080</id>
    </interactant>
    <interactant intactId="EBI-6956">
        <id>Q06205</id>
        <label>FPR4</label>
    </interactant>
    <organismsDiffer>false</organismsDiffer>
    <experiments>3</experiments>
</comment>
<comment type="interaction">
    <interactant intactId="EBI-29395">
        <id>Q12080</id>
    </interactant>
    <interactant intactId="EBI-22906">
        <id>P43586</id>
        <label>LOC1</label>
    </interactant>
    <organismsDiffer>false</organismsDiffer>
    <experiments>3</experiments>
</comment>
<comment type="interaction">
    <interactant intactId="EBI-29395">
        <id>Q12080</id>
    </interactant>
    <interactant intactId="EBI-17814">
        <id>P25582</id>
        <label>SPB1</label>
    </interactant>
    <organismsDiffer>false</organismsDiffer>
    <experiments>4</experiments>
</comment>
<comment type="subcellular location">
    <subcellularLocation>
        <location evidence="3 4 5">Nucleus</location>
        <location evidence="3 4 5">Nucleolus</location>
    </subcellularLocation>
    <subcellularLocation>
        <location evidence="4">Nucleus</location>
        <location evidence="4">Nucleoplasm</location>
    </subcellularLocation>
    <text evidence="4">Does not shuttle from the nucleus to the cytoplasm (PubMed:16043506).</text>
</comment>
<comment type="disruption phenotype">
    <text evidence="3 4 5 6">Inhibition of cell growth. Defects in processing of the rRNA components of the 60S ribosomal subunit and accumulation of the corresponding polyadenylated pre-rRNAs. Some delay in the maturation of the 35S primary transcript and 32S pre-rRNA. Delay in 20S pre-rRNA formation and a severe delay in mature 25S and 5.8S rRNA formation, with accumulation of the 35S, 32S, 27S, 26S and 7S pre-rRNAs and a 5' extended form of the 25S rRNA. Complete loss of synthesis of the mature 25S rRNA. Appearance at a low level of aberrant 23S species. Shorter 18S and 5.8S rRNA at the 5' end. Imbalance in the 40S:60S ratio and defects in progression beyond the 27S stage of 25S rRNA maturation during 60S biogenesis. Decreased ribosomes and polysomes and presence of halfmers.</text>
</comment>
<comment type="miscellaneous">
    <text evidence="2">Present with 1600 molecules/cell in log phase SD medium.</text>
</comment>
<comment type="similarity">
    <text evidence="7">Belongs to the NOP53 family.</text>
</comment>
<sequence>MAPTNLTKKPSQYKQSSRKGKKAWRKNIDLSDVEQYMEKKIDHEITHGTSDITSLQNDALFHVDVEGDEILKNKLIKRKQIKKVLKSKEILDAVKTNSKIAALNHHKNSSGNPNKIQGVSKHELKKLMALAGRVHGESKIKNRVAKDGLVKTTAGDLWGEESNSKKQKVKLPSGIKLDVEKKDQIPEELLKKSTTSWSTASVRPSTLDIEPIAVKEFTEIPHAGKSYNPNNKAWSELINKEYKEEKAREDERIALEKYKERIRHLMETLDDNEEEESSSNEEEEEEEEENENENESTQCSGSDKEIKLSINKPVKNKKKTKYQRNKAKRHEEKVKLQQELKELRQRVKDLEEVINSEETEILSAIESDSNKVKKSKKNKKHKLGTKYSVIDERLEIKFSDELSDSLRKLKPEGNLLYDTVRKLQSSGKVETRVPVRKGRKYKQKITEKWTHKDFK</sequence>
<proteinExistence type="evidence at protein level"/>